<protein>
    <recommendedName>
        <fullName>Prostaglandin E2 receptor EP3 subtype</fullName>
        <shortName>PGE receptor EP3 subtype</shortName>
        <shortName>PGE2 receptor EP3 subtype</shortName>
    </recommendedName>
    <alternativeName>
        <fullName>Prostanoid EP3 receptor</fullName>
    </alternativeName>
</protein>
<gene>
    <name type="primary">PTGER3</name>
</gene>
<feature type="chain" id="PRO_0000070061" description="Prostaglandin E2 receptor EP3 subtype">
    <location>
        <begin position="1"/>
        <end position="411"/>
    </location>
</feature>
<feature type="topological domain" description="Extracellular" evidence="3">
    <location>
        <begin position="1"/>
        <end position="49"/>
    </location>
</feature>
<feature type="transmembrane region" description="Helical; Name=1" evidence="3">
    <location>
        <begin position="50"/>
        <end position="74"/>
    </location>
</feature>
<feature type="topological domain" description="Cytoplasmic" evidence="3">
    <location>
        <begin position="75"/>
        <end position="87"/>
    </location>
</feature>
<feature type="transmembrane region" description="Helical; Name=2" evidence="3">
    <location>
        <begin position="88"/>
        <end position="108"/>
    </location>
</feature>
<feature type="topological domain" description="Extracellular" evidence="3">
    <location>
        <begin position="109"/>
        <end position="127"/>
    </location>
</feature>
<feature type="transmembrane region" description="Helical; Name=3" evidence="3">
    <location>
        <begin position="128"/>
        <end position="149"/>
    </location>
</feature>
<feature type="topological domain" description="Cytoplasmic" evidence="3">
    <location>
        <begin position="150"/>
        <end position="171"/>
    </location>
</feature>
<feature type="transmembrane region" description="Helical; Name=4" evidence="3">
    <location>
        <begin position="172"/>
        <end position="193"/>
    </location>
</feature>
<feature type="topological domain" description="Extracellular" evidence="3">
    <location>
        <begin position="194"/>
        <end position="223"/>
    </location>
</feature>
<feature type="transmembrane region" description="Helical; Name=5" evidence="3">
    <location>
        <begin position="224"/>
        <end position="249"/>
    </location>
</feature>
<feature type="topological domain" description="Cytoplasmic" evidence="3">
    <location>
        <begin position="250"/>
        <end position="279"/>
    </location>
</feature>
<feature type="transmembrane region" description="Helical; Name=6" evidence="3">
    <location>
        <begin position="280"/>
        <end position="303"/>
    </location>
</feature>
<feature type="topological domain" description="Extracellular" evidence="3">
    <location>
        <begin position="304"/>
        <end position="323"/>
    </location>
</feature>
<feature type="transmembrane region" description="Helical; Name=7" evidence="3">
    <location>
        <begin position="324"/>
        <end position="345"/>
    </location>
</feature>
<feature type="topological domain" description="Cytoplasmic" evidence="3">
    <location>
        <begin position="346"/>
        <end position="411"/>
    </location>
</feature>
<feature type="region of interest" description="Disordered" evidence="5">
    <location>
        <begin position="367"/>
        <end position="392"/>
    </location>
</feature>
<feature type="compositionally biased region" description="Basic and acidic residues" evidence="5">
    <location>
        <begin position="367"/>
        <end position="390"/>
    </location>
</feature>
<feature type="glycosylation site" description="N-linked (GlcNAc...) asparagine" evidence="3">
    <location>
        <position position="18"/>
    </location>
</feature>
<feature type="glycosylation site" description="N-linked (GlcNAc...) asparagine" evidence="3">
    <location>
        <position position="32"/>
    </location>
</feature>
<feature type="glycosylation site" description="N-linked (GlcNAc...) asparagine" evidence="3">
    <location>
        <position position="213"/>
    </location>
</feature>
<feature type="disulfide bond" evidence="4">
    <location>
        <begin position="126"/>
        <end position="204"/>
    </location>
</feature>
<feature type="splice variant" id="VSP_001947" description="In isoform 80A." evidence="7">
    <original>VIHENNEQKDEIQRENRNVSHSGQHEEARDSEKS</original>
    <variation>HSPAIGDLQISTHISKTNKYFEGLMKTFHSLAYL</variation>
    <location>
        <begin position="356"/>
        <end position="389"/>
    </location>
</feature>
<feature type="splice variant" id="VSP_001945" description="In isoform 74A." evidence="7">
    <original>VIHENNEQKDEIQRENRNVSHS</original>
    <variation>IRYHTNNYASSSTSLTHQCSST</variation>
    <location>
        <begin position="356"/>
        <end position="377"/>
    </location>
</feature>
<feature type="splice variant" id="VSP_001943" description="In isoform 72A." evidence="7">
    <original>VIHENN</original>
    <variation>EEFWEK</variation>
    <location>
        <begin position="356"/>
        <end position="361"/>
    </location>
</feature>
<feature type="splice variant" id="VSP_001944" description="In isoform 72A." evidence="7">
    <location>
        <begin position="362"/>
        <end position="411"/>
    </location>
</feature>
<feature type="splice variant" id="VSP_001946" description="In isoform 74A." evidence="7">
    <location>
        <begin position="378"/>
        <end position="411"/>
    </location>
</feature>
<feature type="splice variant" id="VSP_001948" description="In isoform 80A." evidence="7">
    <location>
        <begin position="390"/>
        <end position="411"/>
    </location>
</feature>
<feature type="sequence variant">
    <original>T</original>
    <variation>A</variation>
    <location>
        <position position="243"/>
    </location>
</feature>
<keyword id="KW-0025">Alternative splicing</keyword>
<keyword id="KW-1003">Cell membrane</keyword>
<keyword id="KW-1015">Disulfide bond</keyword>
<keyword id="KW-0297">G-protein coupled receptor</keyword>
<keyword id="KW-0325">Glycoprotein</keyword>
<keyword id="KW-0472">Membrane</keyword>
<keyword id="KW-0675">Receptor</keyword>
<keyword id="KW-1185">Reference proteome</keyword>
<keyword id="KW-0807">Transducer</keyword>
<keyword id="KW-0812">Transmembrane</keyword>
<keyword id="KW-1133">Transmembrane helix</keyword>
<sequence>MKETRGDGGSAPFCTRLNHSYPGMWAPEARGNLTRPPGPGEDCGSVSVAFPITMLITGFVGNALAMLLVSRSYRRRESKRKKSFLLCIGWLALTDLVGQLLTSPVVILVYLSKQRWEQLDPSGRLCTFFGLTMTVFGLSSLFIASAMAVERALAIRAPHWYASHMKTRATRAVLLGVWLAVLAFALLPVLGVGQYTIQWPGTWCFISTGRGDNGTSSSHNWGNLFFASTFAFLGLLALAITFTCNLATIKALVSRCRAKAAASQSSAQWGRITTETAIQLMGIMCVLSVCWSPLLIMMLKMIFNQTSVEHCKTDTGKQKECNFFLIAVRLASLNQILDPWVYLLLRKILLRKFCQVIHENNEQKDEIQRENRNVSHSGQHEEARDSEKSKTIPGLFSILLQADPGARPYQQ</sequence>
<comment type="function">
    <text evidence="1 6">Receptor for prostaglandin E2 (PGE2) (PubMed:8119961). Required for normal development of fever in response to pyrinogens, including IL1B, prostaglandin E2 and bacterial lipopolysaccharide (LPS). Required for normal potentiation of platelet aggregation by prostaglandin E2, and thus plays a role in the regulation of blood coagulation. Required for increased HCO3(-) secretion in the duodenum in response to mucosal acidification, and thereby contributes to the protection of the mucosa against acid-induced ulceration. Not required for normal kidney function, normal urine volume and osmolality (By similarity).</text>
</comment>
<comment type="subunit">
    <text evidence="2">Interacts (via C-terminus) with MKLN1.</text>
</comment>
<comment type="subcellular location">
    <subcellularLocation>
        <location evidence="9">Cell membrane</location>
        <topology evidence="8">Multi-pass membrane protein</topology>
    </subcellularLocation>
</comment>
<comment type="alternative products">
    <event type="alternative splicing"/>
    <isoform>
        <id>P46069-1</id>
        <name>77A</name>
        <sequence type="displayed"/>
    </isoform>
    <isoform>
        <id>P46069-2</id>
        <name>72A</name>
        <sequence type="described" ref="VSP_001943 VSP_001944"/>
    </isoform>
    <isoform>
        <id>P46069-3</id>
        <name>74A</name>
        <sequence type="described" ref="VSP_001945 VSP_001946"/>
    </isoform>
    <isoform>
        <id>P46069-4</id>
        <name>80A</name>
        <sequence type="described" ref="VSP_001947 VSP_001948"/>
    </isoform>
    <text>Additional isoforms seem to exist.</text>
</comment>
<comment type="tissue specificity">
    <text evidence="6">In the kidney cortex and medulla, adrenal gland and stomach. In kidney, expression is higher in tubules in the outer medulla, with lower levels in cortex. In kidney cortex, expression is restricted to distal tubules.</text>
</comment>
<comment type="similarity">
    <text evidence="4">Belongs to the G-protein coupled receptor 1 family.</text>
</comment>
<evidence type="ECO:0000250" key="1">
    <source>
        <dbReference type="UniProtKB" id="P30557"/>
    </source>
</evidence>
<evidence type="ECO:0000250" key="2">
    <source>
        <dbReference type="UniProtKB" id="P34980"/>
    </source>
</evidence>
<evidence type="ECO:0000255" key="3"/>
<evidence type="ECO:0000255" key="4">
    <source>
        <dbReference type="PROSITE-ProRule" id="PRU00521"/>
    </source>
</evidence>
<evidence type="ECO:0000256" key="5">
    <source>
        <dbReference type="SAM" id="MobiDB-lite"/>
    </source>
</evidence>
<evidence type="ECO:0000269" key="6">
    <source>
    </source>
</evidence>
<evidence type="ECO:0000303" key="7">
    <source>
    </source>
</evidence>
<evidence type="ECO:0000305" key="8"/>
<evidence type="ECO:0000305" key="9">
    <source>
    </source>
</evidence>
<name>PE2R3_RABIT</name>
<reference key="1">
    <citation type="journal article" date="1994" name="J. Biol. Chem.">
        <title>Alternative splicing generates multiple isoforms of a rabbit prostaglandin E2 receptor.</title>
        <authorList>
            <person name="Breyer R.M."/>
            <person name="Emeson R.B."/>
            <person name="Tarng J.L."/>
            <person name="Breyer M.D."/>
            <person name="Davis L.S."/>
            <person name="Abromson R.M."/>
            <person name="Ferrenbach S.M."/>
        </authorList>
    </citation>
    <scope>NUCLEOTIDE SEQUENCE [MRNA] (ISOFORMS 77A; 72A; 74A AND 80A)</scope>
    <scope>FUNCTION</scope>
    <scope>SUBCELLULAR LOCATION</scope>
    <scope>TISSUE SPECIFICITY</scope>
    <source>
        <strain>New Zealand white</strain>
        <tissue>Kidney cortex</tissue>
    </source>
</reference>
<proteinExistence type="evidence at transcript level"/>
<dbReference type="EMBL" id="U04274">
    <property type="protein sequence ID" value="AAA17413.1"/>
    <property type="molecule type" value="mRNA"/>
</dbReference>
<dbReference type="EMBL" id="U04273">
    <property type="protein sequence ID" value="AAA17412.1"/>
    <property type="molecule type" value="mRNA"/>
</dbReference>
<dbReference type="EMBL" id="U04275">
    <property type="protein sequence ID" value="AAA17414.1"/>
    <property type="molecule type" value="mRNA"/>
</dbReference>
<dbReference type="EMBL" id="U04276">
    <property type="protein sequence ID" value="AAA17415.1"/>
    <property type="molecule type" value="mRNA"/>
</dbReference>
<dbReference type="PIR" id="A53216">
    <property type="entry name" value="A53216"/>
</dbReference>
<dbReference type="PIR" id="B53216">
    <property type="entry name" value="B53216"/>
</dbReference>
<dbReference type="PIR" id="D53216">
    <property type="entry name" value="D53216"/>
</dbReference>
<dbReference type="RefSeq" id="NP_001076140.1">
    <property type="nucleotide sequence ID" value="NM_001082671.1"/>
</dbReference>
<dbReference type="RefSeq" id="NP_001116407.1">
    <molecule id="P46069-1"/>
    <property type="nucleotide sequence ID" value="NM_001122935.1"/>
</dbReference>
<dbReference type="SMR" id="P46069"/>
<dbReference type="FunCoup" id="P46069">
    <property type="interactions" value="143"/>
</dbReference>
<dbReference type="STRING" id="9986.ENSOCUP00000047267"/>
<dbReference type="GlyCosmos" id="P46069">
    <property type="glycosylation" value="3 sites, No reported glycans"/>
</dbReference>
<dbReference type="PaxDb" id="9986-ENSOCUP00000017018"/>
<dbReference type="GeneID" id="100009389"/>
<dbReference type="KEGG" id="ocu:100009389"/>
<dbReference type="CTD" id="5733"/>
<dbReference type="eggNOG" id="KOG3656">
    <property type="taxonomic scope" value="Eukaryota"/>
</dbReference>
<dbReference type="InParanoid" id="P46069"/>
<dbReference type="OrthoDB" id="5959154at2759"/>
<dbReference type="Proteomes" id="UP000001811">
    <property type="component" value="Unplaced"/>
</dbReference>
<dbReference type="GO" id="GO:0005886">
    <property type="term" value="C:plasma membrane"/>
    <property type="evidence" value="ECO:0000250"/>
    <property type="project" value="UniProtKB"/>
</dbReference>
<dbReference type="GO" id="GO:0004957">
    <property type="term" value="F:prostaglandin E receptor activity"/>
    <property type="evidence" value="ECO:0007669"/>
    <property type="project" value="InterPro"/>
</dbReference>
<dbReference type="GO" id="GO:0007189">
    <property type="term" value="P:adenylate cyclase-activating G protein-coupled receptor signaling pathway"/>
    <property type="evidence" value="ECO:0007669"/>
    <property type="project" value="TreeGrafter"/>
</dbReference>
<dbReference type="GO" id="GO:0006954">
    <property type="term" value="P:inflammatory response"/>
    <property type="evidence" value="ECO:0007669"/>
    <property type="project" value="TreeGrafter"/>
</dbReference>
<dbReference type="GO" id="GO:0014827">
    <property type="term" value="P:intestine smooth muscle contraction"/>
    <property type="evidence" value="ECO:0007669"/>
    <property type="project" value="TreeGrafter"/>
</dbReference>
<dbReference type="GO" id="GO:0060455">
    <property type="term" value="P:negative regulation of gastric acid secretion"/>
    <property type="evidence" value="ECO:0007669"/>
    <property type="project" value="TreeGrafter"/>
</dbReference>
<dbReference type="GO" id="GO:0007200">
    <property type="term" value="P:phospholipase C-activating G protein-coupled receptor signaling pathway"/>
    <property type="evidence" value="ECO:0007669"/>
    <property type="project" value="TreeGrafter"/>
</dbReference>
<dbReference type="GO" id="GO:0007204">
    <property type="term" value="P:positive regulation of cytosolic calcium ion concentration"/>
    <property type="evidence" value="ECO:0007669"/>
    <property type="project" value="TreeGrafter"/>
</dbReference>
<dbReference type="FunFam" id="1.20.1070.10:FF:000087">
    <property type="entry name" value="prostaglandin E2 receptor EP3 subtype"/>
    <property type="match status" value="1"/>
</dbReference>
<dbReference type="Gene3D" id="1.20.1070.10">
    <property type="entry name" value="Rhodopsin 7-helix transmembrane proteins"/>
    <property type="match status" value="1"/>
</dbReference>
<dbReference type="InterPro" id="IPR001481">
    <property type="entry name" value="EP3_rcpt_2"/>
</dbReference>
<dbReference type="InterPro" id="IPR000276">
    <property type="entry name" value="GPCR_Rhodpsn"/>
</dbReference>
<dbReference type="InterPro" id="IPR017452">
    <property type="entry name" value="GPCR_Rhodpsn_7TM"/>
</dbReference>
<dbReference type="InterPro" id="IPR008365">
    <property type="entry name" value="Prostanoid_rcpt"/>
</dbReference>
<dbReference type="InterPro" id="IPR001244">
    <property type="entry name" value="Prostglndn_DP_rcpt"/>
</dbReference>
<dbReference type="InterPro" id="IPR000265">
    <property type="entry name" value="Prostglndn_EP3_rcpt"/>
</dbReference>
<dbReference type="PANTHER" id="PTHR11866">
    <property type="entry name" value="G-PROTEIN COUPLED RECEPTOR FAMILY 1 MEMBER"/>
    <property type="match status" value="1"/>
</dbReference>
<dbReference type="PANTHER" id="PTHR11866:SF10">
    <property type="entry name" value="PROSTAGLANDIN E2 RECEPTOR EP3 SUBTYPE"/>
    <property type="match status" value="1"/>
</dbReference>
<dbReference type="Pfam" id="PF00001">
    <property type="entry name" value="7tm_1"/>
    <property type="match status" value="1"/>
</dbReference>
<dbReference type="PRINTS" id="PR00237">
    <property type="entry name" value="GPCRRHODOPSN"/>
</dbReference>
<dbReference type="PRINTS" id="PR00428">
    <property type="entry name" value="PROSTAGLNDNR"/>
</dbReference>
<dbReference type="PRINTS" id="PR01788">
    <property type="entry name" value="PROSTANOIDR"/>
</dbReference>
<dbReference type="PRINTS" id="PR00584">
    <property type="entry name" value="PRSTNOIDE32R"/>
</dbReference>
<dbReference type="PRINTS" id="PR00582">
    <property type="entry name" value="PRSTNOIDEP3R"/>
</dbReference>
<dbReference type="SUPFAM" id="SSF81321">
    <property type="entry name" value="Family A G protein-coupled receptor-like"/>
    <property type="match status" value="1"/>
</dbReference>
<dbReference type="PROSITE" id="PS50262">
    <property type="entry name" value="G_PROTEIN_RECEP_F1_2"/>
    <property type="match status" value="1"/>
</dbReference>
<accession>P46069</accession>
<organism>
    <name type="scientific">Oryctolagus cuniculus</name>
    <name type="common">Rabbit</name>
    <dbReference type="NCBI Taxonomy" id="9986"/>
    <lineage>
        <taxon>Eukaryota</taxon>
        <taxon>Metazoa</taxon>
        <taxon>Chordata</taxon>
        <taxon>Craniata</taxon>
        <taxon>Vertebrata</taxon>
        <taxon>Euteleostomi</taxon>
        <taxon>Mammalia</taxon>
        <taxon>Eutheria</taxon>
        <taxon>Euarchontoglires</taxon>
        <taxon>Glires</taxon>
        <taxon>Lagomorpha</taxon>
        <taxon>Leporidae</taxon>
        <taxon>Oryctolagus</taxon>
    </lineage>
</organism>